<dbReference type="EMBL" id="AY261363">
    <property type="status" value="NOT_ANNOTATED_CDS"/>
    <property type="molecule type" value="Genomic_DNA"/>
</dbReference>
<dbReference type="Proteomes" id="UP000000859">
    <property type="component" value="Segment"/>
</dbReference>
<accession>P0CAA5</accession>
<evidence type="ECO:0000305" key="1"/>
<feature type="chain" id="PRO_0000373597" description="Uncharacterized protein H233R">
    <location>
        <begin position="1"/>
        <end position="233"/>
    </location>
</feature>
<gene>
    <name type="ordered locus">Pret-130</name>
</gene>
<proteinExistence type="inferred from homology"/>
<comment type="induction">
    <text evidence="1">Expressed in the late phase of the viral replicative cycle.</text>
</comment>
<comment type="similarity">
    <text evidence="1">Belongs to the asfivirus H233R family.</text>
</comment>
<reference key="1">
    <citation type="submission" date="2003-03" db="EMBL/GenBank/DDBJ databases">
        <title>African swine fever virus genomes.</title>
        <authorList>
            <person name="Kutish G.F."/>
            <person name="Rock D.L."/>
        </authorList>
    </citation>
    <scope>NUCLEOTIDE SEQUENCE [GENOMIC DNA]</scope>
</reference>
<sequence length="233" mass="25712">MILIASPFSLAHLEYLHTWHVTIKNIAQQHGLDIKVAIVVSTSHLNTFLPISTALNIECITFPGCGIKEIDLLWARIKLFQHYCAIGARLLWLVSADIRPPVSTWPAIADSLKKGADAVVIPYPSRWNNLIPTVIKEIVVHQKKCLVAVDARHLDTDTQIVGAGMGCIVLTLKALMVRLSIGKQPIKILWPDLHGTAEGIPLEGVEVGWFLNAYAHKLNIRCLGADHIAQHLT</sequence>
<organism>
    <name type="scientific">African swine fever virus (isolate Tick/South Africa/Pretoriuskop Pr4/1996)</name>
    <name type="common">ASFV</name>
    <dbReference type="NCBI Taxonomy" id="561443"/>
    <lineage>
        <taxon>Viruses</taxon>
        <taxon>Varidnaviria</taxon>
        <taxon>Bamfordvirae</taxon>
        <taxon>Nucleocytoviricota</taxon>
        <taxon>Pokkesviricetes</taxon>
        <taxon>Asfuvirales</taxon>
        <taxon>Asfarviridae</taxon>
        <taxon>Asfivirus</taxon>
        <taxon>African swine fever virus</taxon>
    </lineage>
</organism>
<organismHost>
    <name type="scientific">Ornithodoros</name>
    <name type="common">relapsing fever ticks</name>
    <dbReference type="NCBI Taxonomy" id="6937"/>
</organismHost>
<organismHost>
    <name type="scientific">Phacochoerus aethiopicus</name>
    <name type="common">Warthog</name>
    <dbReference type="NCBI Taxonomy" id="85517"/>
</organismHost>
<organismHost>
    <name type="scientific">Phacochoerus africanus</name>
    <name type="common">Warthog</name>
    <dbReference type="NCBI Taxonomy" id="41426"/>
</organismHost>
<organismHost>
    <name type="scientific">Potamochoerus larvatus</name>
    <name type="common">Bushpig</name>
    <dbReference type="NCBI Taxonomy" id="273792"/>
</organismHost>
<organismHost>
    <name type="scientific">Sus scrofa</name>
    <name type="common">Pig</name>
    <dbReference type="NCBI Taxonomy" id="9823"/>
</organismHost>
<name>VF233_ASFP4</name>
<keyword id="KW-0426">Late protein</keyword>
<protein>
    <recommendedName>
        <fullName>Uncharacterized protein H233R</fullName>
        <shortName>pH233R</shortName>
    </recommendedName>
</protein>